<sequence length="151" mass="16958">MESPIRFADVDINTILKTLPHRFPFLLIDRVKNIREDHSGIGVKNVTFNEPAFQGHFPERPVFPGVLMIEGMAQTAGVIGIMSVTGTEKPRAVYFLTIDKCKFRKPVLPGDTIEYHMKSIGRRKTMWWFHGDAIVDGQTVAEADVGAMLTD</sequence>
<dbReference type="EC" id="4.2.1.59" evidence="1"/>
<dbReference type="EMBL" id="CP000250">
    <property type="protein sequence ID" value="ABD07520.1"/>
    <property type="molecule type" value="Genomic_DNA"/>
</dbReference>
<dbReference type="RefSeq" id="WP_011441705.1">
    <property type="nucleotide sequence ID" value="NC_007778.1"/>
</dbReference>
<dbReference type="SMR" id="Q2IW90"/>
<dbReference type="STRING" id="316058.RPB_2818"/>
<dbReference type="KEGG" id="rpb:RPB_2818"/>
<dbReference type="eggNOG" id="COG0764">
    <property type="taxonomic scope" value="Bacteria"/>
</dbReference>
<dbReference type="HOGENOM" id="CLU_078912_1_0_5"/>
<dbReference type="OrthoDB" id="9772788at2"/>
<dbReference type="Proteomes" id="UP000008809">
    <property type="component" value="Chromosome"/>
</dbReference>
<dbReference type="GO" id="GO:0005737">
    <property type="term" value="C:cytoplasm"/>
    <property type="evidence" value="ECO:0007669"/>
    <property type="project" value="UniProtKB-SubCell"/>
</dbReference>
<dbReference type="GO" id="GO:0016020">
    <property type="term" value="C:membrane"/>
    <property type="evidence" value="ECO:0007669"/>
    <property type="project" value="GOC"/>
</dbReference>
<dbReference type="GO" id="GO:0019171">
    <property type="term" value="F:(3R)-hydroxyacyl-[acyl-carrier-protein] dehydratase activity"/>
    <property type="evidence" value="ECO:0007669"/>
    <property type="project" value="UniProtKB-EC"/>
</dbReference>
<dbReference type="GO" id="GO:0006633">
    <property type="term" value="P:fatty acid biosynthetic process"/>
    <property type="evidence" value="ECO:0007669"/>
    <property type="project" value="UniProtKB-UniRule"/>
</dbReference>
<dbReference type="GO" id="GO:0009245">
    <property type="term" value="P:lipid A biosynthetic process"/>
    <property type="evidence" value="ECO:0007669"/>
    <property type="project" value="UniProtKB-UniRule"/>
</dbReference>
<dbReference type="CDD" id="cd01288">
    <property type="entry name" value="FabZ"/>
    <property type="match status" value="1"/>
</dbReference>
<dbReference type="FunFam" id="3.10.129.10:FF:000001">
    <property type="entry name" value="3-hydroxyacyl-[acyl-carrier-protein] dehydratase FabZ"/>
    <property type="match status" value="1"/>
</dbReference>
<dbReference type="Gene3D" id="3.10.129.10">
    <property type="entry name" value="Hotdog Thioesterase"/>
    <property type="match status" value="1"/>
</dbReference>
<dbReference type="HAMAP" id="MF_00406">
    <property type="entry name" value="FabZ"/>
    <property type="match status" value="1"/>
</dbReference>
<dbReference type="InterPro" id="IPR013114">
    <property type="entry name" value="FabA_FabZ"/>
</dbReference>
<dbReference type="InterPro" id="IPR010084">
    <property type="entry name" value="FabZ"/>
</dbReference>
<dbReference type="InterPro" id="IPR029069">
    <property type="entry name" value="HotDog_dom_sf"/>
</dbReference>
<dbReference type="NCBIfam" id="TIGR01750">
    <property type="entry name" value="fabZ"/>
    <property type="match status" value="1"/>
</dbReference>
<dbReference type="NCBIfam" id="NF000582">
    <property type="entry name" value="PRK00006.1"/>
    <property type="match status" value="1"/>
</dbReference>
<dbReference type="PANTHER" id="PTHR30272">
    <property type="entry name" value="3-HYDROXYACYL-[ACYL-CARRIER-PROTEIN] DEHYDRATASE"/>
    <property type="match status" value="1"/>
</dbReference>
<dbReference type="PANTHER" id="PTHR30272:SF1">
    <property type="entry name" value="3-HYDROXYACYL-[ACYL-CARRIER-PROTEIN] DEHYDRATASE"/>
    <property type="match status" value="1"/>
</dbReference>
<dbReference type="Pfam" id="PF07977">
    <property type="entry name" value="FabA"/>
    <property type="match status" value="1"/>
</dbReference>
<dbReference type="SUPFAM" id="SSF54637">
    <property type="entry name" value="Thioesterase/thiol ester dehydrase-isomerase"/>
    <property type="match status" value="1"/>
</dbReference>
<accession>Q2IW90</accession>
<proteinExistence type="inferred from homology"/>
<gene>
    <name evidence="1" type="primary">fabZ</name>
    <name type="ordered locus">RPB_2818</name>
</gene>
<protein>
    <recommendedName>
        <fullName evidence="1">3-hydroxyacyl-[acyl-carrier-protein] dehydratase FabZ</fullName>
        <ecNumber evidence="1">4.2.1.59</ecNumber>
    </recommendedName>
    <alternativeName>
        <fullName evidence="1">(3R)-hydroxymyristoyl-[acyl-carrier-protein] dehydratase</fullName>
        <shortName evidence="1">(3R)-hydroxymyristoyl-ACP dehydrase</shortName>
    </alternativeName>
    <alternativeName>
        <fullName evidence="1">Beta-hydroxyacyl-ACP dehydratase</fullName>
    </alternativeName>
</protein>
<comment type="function">
    <text evidence="1">Involved in unsaturated fatty acids biosynthesis. Catalyzes the dehydration of short chain beta-hydroxyacyl-ACPs and long chain saturated and unsaturated beta-hydroxyacyl-ACPs.</text>
</comment>
<comment type="catalytic activity">
    <reaction evidence="1">
        <text>a (3R)-hydroxyacyl-[ACP] = a (2E)-enoyl-[ACP] + H2O</text>
        <dbReference type="Rhea" id="RHEA:13097"/>
        <dbReference type="Rhea" id="RHEA-COMP:9925"/>
        <dbReference type="Rhea" id="RHEA-COMP:9945"/>
        <dbReference type="ChEBI" id="CHEBI:15377"/>
        <dbReference type="ChEBI" id="CHEBI:78784"/>
        <dbReference type="ChEBI" id="CHEBI:78827"/>
        <dbReference type="EC" id="4.2.1.59"/>
    </reaction>
</comment>
<comment type="subcellular location">
    <subcellularLocation>
        <location evidence="1">Cytoplasm</location>
    </subcellularLocation>
</comment>
<comment type="similarity">
    <text evidence="1">Belongs to the thioester dehydratase family. FabZ subfamily.</text>
</comment>
<reference key="1">
    <citation type="submission" date="2006-01" db="EMBL/GenBank/DDBJ databases">
        <title>Complete sequence of Rhodopseudomonas palustris HaA2.</title>
        <authorList>
            <consortium name="US DOE Joint Genome Institute"/>
            <person name="Copeland A."/>
            <person name="Lucas S."/>
            <person name="Lapidus A."/>
            <person name="Barry K."/>
            <person name="Detter J.C."/>
            <person name="Glavina T."/>
            <person name="Hammon N."/>
            <person name="Israni S."/>
            <person name="Pitluck S."/>
            <person name="Chain P."/>
            <person name="Malfatti S."/>
            <person name="Shin M."/>
            <person name="Vergez L."/>
            <person name="Schmutz J."/>
            <person name="Larimer F."/>
            <person name="Land M."/>
            <person name="Hauser L."/>
            <person name="Pelletier D.A."/>
            <person name="Kyrpides N."/>
            <person name="Anderson I."/>
            <person name="Oda Y."/>
            <person name="Harwood C.S."/>
            <person name="Richardson P."/>
        </authorList>
    </citation>
    <scope>NUCLEOTIDE SEQUENCE [LARGE SCALE GENOMIC DNA]</scope>
    <source>
        <strain>HaA2</strain>
    </source>
</reference>
<organism>
    <name type="scientific">Rhodopseudomonas palustris (strain HaA2)</name>
    <dbReference type="NCBI Taxonomy" id="316058"/>
    <lineage>
        <taxon>Bacteria</taxon>
        <taxon>Pseudomonadati</taxon>
        <taxon>Pseudomonadota</taxon>
        <taxon>Alphaproteobacteria</taxon>
        <taxon>Hyphomicrobiales</taxon>
        <taxon>Nitrobacteraceae</taxon>
        <taxon>Rhodopseudomonas</taxon>
    </lineage>
</organism>
<feature type="chain" id="PRO_0000242898" description="3-hydroxyacyl-[acyl-carrier-protein] dehydratase FabZ">
    <location>
        <begin position="1"/>
        <end position="151"/>
    </location>
</feature>
<feature type="active site" evidence="1">
    <location>
        <position position="56"/>
    </location>
</feature>
<keyword id="KW-0963">Cytoplasm</keyword>
<keyword id="KW-0441">Lipid A biosynthesis</keyword>
<keyword id="KW-0444">Lipid biosynthesis</keyword>
<keyword id="KW-0443">Lipid metabolism</keyword>
<keyword id="KW-0456">Lyase</keyword>
<keyword id="KW-1185">Reference proteome</keyword>
<name>FABZ_RHOP2</name>
<evidence type="ECO:0000255" key="1">
    <source>
        <dbReference type="HAMAP-Rule" id="MF_00406"/>
    </source>
</evidence>